<feature type="chain" id="PRO_0000264963" description="UvrABC system protein C">
    <location>
        <begin position="1"/>
        <end position="661"/>
    </location>
</feature>
<feature type="domain" description="GIY-YIG" evidence="1">
    <location>
        <begin position="25"/>
        <end position="104"/>
    </location>
</feature>
<feature type="domain" description="UVR" evidence="1">
    <location>
        <begin position="214"/>
        <end position="249"/>
    </location>
</feature>
<feature type="region of interest" description="Disordered" evidence="2">
    <location>
        <begin position="636"/>
        <end position="661"/>
    </location>
</feature>
<feature type="compositionally biased region" description="Basic and acidic residues" evidence="2">
    <location>
        <begin position="636"/>
        <end position="652"/>
    </location>
</feature>
<accession>Q3AJW5</accession>
<sequence length="661" mass="75777">MDAASGAPLLTQPERLERRLKEIPAEPGCYLMRDCDDRILYVGKSKALRSRVRSYFRSRHDLSPRIRLMTRQVCEIEFIVTDSEAEALVLESNLIKNHQPHFNVLLKDDKKYPYLCITWSEAYPRIFITRRRRFRSPLDRFYGPYVDVGLLRRTLFLVKRVFPLRQRPRPMYPDRTCLNYSIGRCPGVCQEKISSVDYHRTLRKVAMVFQGRSDELQHLLQEQMERYAERMDYESAARVRDQLQGLDQLTADQKMSLPDSSVSRDVLALAFDERLAAVQLFQMRAGKLVGRLGYTADASGLEPGLILQRVIEEHYSQVDSVEVPPELLVQHALPQQKLMEDWLTEQRERRVQIHCPQRQQKADLIELVQRNAEFELLRAKQGQEKQSLATEDLAQLLELPTPPRRIEGYDISHIQGSDAVASQVVFIDGLPAKQHYRKYKIRSSSIRAGHSDDFMAMAEIMRRRFRRWARAKAEGMDVGALRHKGGSALQTDGLNDWPDVVMIDGGKGQLSAVMEALRELDLHEDLNVCSLAKQREEVFLPGESQPLESEPDQLGVVLLRRLRDEAHRFAVSFHRQQRGERMKRSRLSDIPGVGPKRVKDLLAHFHSIDAIQLASIETLSKAPGVGPALARDIHDFFHPSDEGTDADARAALEEQPQELSA</sequence>
<evidence type="ECO:0000255" key="1">
    <source>
        <dbReference type="HAMAP-Rule" id="MF_00203"/>
    </source>
</evidence>
<evidence type="ECO:0000256" key="2">
    <source>
        <dbReference type="SAM" id="MobiDB-lite"/>
    </source>
</evidence>
<reference key="1">
    <citation type="submission" date="2005-07" db="EMBL/GenBank/DDBJ databases">
        <title>Complete sequence of Synechococcus sp. CC9605.</title>
        <authorList>
            <consortium name="US DOE Joint Genome Institute"/>
            <person name="Copeland A."/>
            <person name="Lucas S."/>
            <person name="Lapidus A."/>
            <person name="Barry K."/>
            <person name="Detter J.C."/>
            <person name="Glavina T."/>
            <person name="Hammon N."/>
            <person name="Israni S."/>
            <person name="Pitluck S."/>
            <person name="Schmutz J."/>
            <person name="Martinez M."/>
            <person name="Larimer F."/>
            <person name="Land M."/>
            <person name="Kyrpides N."/>
            <person name="Ivanova N."/>
            <person name="Richardson P."/>
        </authorList>
    </citation>
    <scope>NUCLEOTIDE SEQUENCE [LARGE SCALE GENOMIC DNA]</scope>
    <source>
        <strain>CC9605</strain>
    </source>
</reference>
<organism>
    <name type="scientific">Synechococcus sp. (strain CC9605)</name>
    <dbReference type="NCBI Taxonomy" id="110662"/>
    <lineage>
        <taxon>Bacteria</taxon>
        <taxon>Bacillati</taxon>
        <taxon>Cyanobacteriota</taxon>
        <taxon>Cyanophyceae</taxon>
        <taxon>Synechococcales</taxon>
        <taxon>Synechococcaceae</taxon>
        <taxon>Synechococcus</taxon>
    </lineage>
</organism>
<dbReference type="EMBL" id="CP000110">
    <property type="protein sequence ID" value="ABB35117.1"/>
    <property type="molecule type" value="Genomic_DNA"/>
</dbReference>
<dbReference type="RefSeq" id="WP_011364335.1">
    <property type="nucleotide sequence ID" value="NC_007516.1"/>
</dbReference>
<dbReference type="SMR" id="Q3AJW5"/>
<dbReference type="STRING" id="110662.Syncc9605_1363"/>
<dbReference type="KEGG" id="syd:Syncc9605_1363"/>
<dbReference type="eggNOG" id="COG0322">
    <property type="taxonomic scope" value="Bacteria"/>
</dbReference>
<dbReference type="HOGENOM" id="CLU_014841_3_2_3"/>
<dbReference type="OrthoDB" id="9804933at2"/>
<dbReference type="GO" id="GO:0005737">
    <property type="term" value="C:cytoplasm"/>
    <property type="evidence" value="ECO:0007669"/>
    <property type="project" value="UniProtKB-SubCell"/>
</dbReference>
<dbReference type="GO" id="GO:0009380">
    <property type="term" value="C:excinuclease repair complex"/>
    <property type="evidence" value="ECO:0007669"/>
    <property type="project" value="InterPro"/>
</dbReference>
<dbReference type="GO" id="GO:0003677">
    <property type="term" value="F:DNA binding"/>
    <property type="evidence" value="ECO:0007669"/>
    <property type="project" value="UniProtKB-UniRule"/>
</dbReference>
<dbReference type="GO" id="GO:0009381">
    <property type="term" value="F:excinuclease ABC activity"/>
    <property type="evidence" value="ECO:0007669"/>
    <property type="project" value="UniProtKB-UniRule"/>
</dbReference>
<dbReference type="GO" id="GO:0006289">
    <property type="term" value="P:nucleotide-excision repair"/>
    <property type="evidence" value="ECO:0007669"/>
    <property type="project" value="UniProtKB-UniRule"/>
</dbReference>
<dbReference type="GO" id="GO:0009432">
    <property type="term" value="P:SOS response"/>
    <property type="evidence" value="ECO:0007669"/>
    <property type="project" value="UniProtKB-UniRule"/>
</dbReference>
<dbReference type="CDD" id="cd10434">
    <property type="entry name" value="GIY-YIG_UvrC_Cho"/>
    <property type="match status" value="1"/>
</dbReference>
<dbReference type="FunFam" id="3.40.1440.10:FF:000001">
    <property type="entry name" value="UvrABC system protein C"/>
    <property type="match status" value="1"/>
</dbReference>
<dbReference type="Gene3D" id="1.10.150.20">
    <property type="entry name" value="5' to 3' exonuclease, C-terminal subdomain"/>
    <property type="match status" value="1"/>
</dbReference>
<dbReference type="Gene3D" id="3.40.1440.10">
    <property type="entry name" value="GIY-YIG endonuclease"/>
    <property type="match status" value="1"/>
</dbReference>
<dbReference type="Gene3D" id="4.10.860.10">
    <property type="entry name" value="UVR domain"/>
    <property type="match status" value="1"/>
</dbReference>
<dbReference type="Gene3D" id="3.30.420.340">
    <property type="entry name" value="UvrC, RNAse H endonuclease domain"/>
    <property type="match status" value="1"/>
</dbReference>
<dbReference type="HAMAP" id="MF_00203">
    <property type="entry name" value="UvrC"/>
    <property type="match status" value="1"/>
</dbReference>
<dbReference type="InterPro" id="IPR000305">
    <property type="entry name" value="GIY-YIG_endonuc"/>
</dbReference>
<dbReference type="InterPro" id="IPR035901">
    <property type="entry name" value="GIY-YIG_endonuc_sf"/>
</dbReference>
<dbReference type="InterPro" id="IPR047296">
    <property type="entry name" value="GIY-YIG_UvrC_Cho"/>
</dbReference>
<dbReference type="InterPro" id="IPR003583">
    <property type="entry name" value="Hlx-hairpin-Hlx_DNA-bd_motif"/>
</dbReference>
<dbReference type="InterPro" id="IPR010994">
    <property type="entry name" value="RuvA_2-like"/>
</dbReference>
<dbReference type="InterPro" id="IPR001943">
    <property type="entry name" value="UVR_dom"/>
</dbReference>
<dbReference type="InterPro" id="IPR036876">
    <property type="entry name" value="UVR_dom_sf"/>
</dbReference>
<dbReference type="InterPro" id="IPR050066">
    <property type="entry name" value="UvrABC_protein_C"/>
</dbReference>
<dbReference type="InterPro" id="IPR004791">
    <property type="entry name" value="UvrC"/>
</dbReference>
<dbReference type="InterPro" id="IPR001162">
    <property type="entry name" value="UvrC_RNase_H_dom"/>
</dbReference>
<dbReference type="InterPro" id="IPR038476">
    <property type="entry name" value="UvrC_RNase_H_dom_sf"/>
</dbReference>
<dbReference type="NCBIfam" id="NF001824">
    <property type="entry name" value="PRK00558.1-5"/>
    <property type="match status" value="1"/>
</dbReference>
<dbReference type="NCBIfam" id="TIGR00194">
    <property type="entry name" value="uvrC"/>
    <property type="match status" value="1"/>
</dbReference>
<dbReference type="PANTHER" id="PTHR30562:SF1">
    <property type="entry name" value="UVRABC SYSTEM PROTEIN C"/>
    <property type="match status" value="1"/>
</dbReference>
<dbReference type="PANTHER" id="PTHR30562">
    <property type="entry name" value="UVRC/OXIDOREDUCTASE"/>
    <property type="match status" value="1"/>
</dbReference>
<dbReference type="Pfam" id="PF01541">
    <property type="entry name" value="GIY-YIG"/>
    <property type="match status" value="1"/>
</dbReference>
<dbReference type="Pfam" id="PF14520">
    <property type="entry name" value="HHH_5"/>
    <property type="match status" value="1"/>
</dbReference>
<dbReference type="Pfam" id="PF02151">
    <property type="entry name" value="UVR"/>
    <property type="match status" value="1"/>
</dbReference>
<dbReference type="Pfam" id="PF22920">
    <property type="entry name" value="UvrC_RNaseH"/>
    <property type="match status" value="1"/>
</dbReference>
<dbReference type="Pfam" id="PF08459">
    <property type="entry name" value="UvrC_RNaseH_dom"/>
    <property type="match status" value="1"/>
</dbReference>
<dbReference type="SMART" id="SM00465">
    <property type="entry name" value="GIYc"/>
    <property type="match status" value="1"/>
</dbReference>
<dbReference type="SMART" id="SM00278">
    <property type="entry name" value="HhH1"/>
    <property type="match status" value="2"/>
</dbReference>
<dbReference type="SUPFAM" id="SSF46600">
    <property type="entry name" value="C-terminal UvrC-binding domain of UvrB"/>
    <property type="match status" value="1"/>
</dbReference>
<dbReference type="SUPFAM" id="SSF82771">
    <property type="entry name" value="GIY-YIG endonuclease"/>
    <property type="match status" value="1"/>
</dbReference>
<dbReference type="SUPFAM" id="SSF47781">
    <property type="entry name" value="RuvA domain 2-like"/>
    <property type="match status" value="1"/>
</dbReference>
<dbReference type="PROSITE" id="PS50164">
    <property type="entry name" value="GIY_YIG"/>
    <property type="match status" value="1"/>
</dbReference>
<dbReference type="PROSITE" id="PS50151">
    <property type="entry name" value="UVR"/>
    <property type="match status" value="1"/>
</dbReference>
<dbReference type="PROSITE" id="PS50165">
    <property type="entry name" value="UVRC"/>
    <property type="match status" value="1"/>
</dbReference>
<protein>
    <recommendedName>
        <fullName evidence="1">UvrABC system protein C</fullName>
        <shortName evidence="1">Protein UvrC</shortName>
    </recommendedName>
    <alternativeName>
        <fullName evidence="1">Excinuclease ABC subunit C</fullName>
    </alternativeName>
</protein>
<name>UVRC_SYNSC</name>
<comment type="function">
    <text evidence="1">The UvrABC repair system catalyzes the recognition and processing of DNA lesions. UvrC both incises the 5' and 3' sides of the lesion. The N-terminal half is responsible for the 3' incision and the C-terminal half is responsible for the 5' incision.</text>
</comment>
<comment type="subunit">
    <text evidence="1">Interacts with UvrB in an incision complex.</text>
</comment>
<comment type="subcellular location">
    <subcellularLocation>
        <location evidence="1">Cytoplasm</location>
    </subcellularLocation>
</comment>
<comment type="similarity">
    <text evidence="1">Belongs to the UvrC family.</text>
</comment>
<gene>
    <name evidence="1" type="primary">uvrC</name>
    <name type="ordered locus">Syncc9605_1363</name>
</gene>
<proteinExistence type="inferred from homology"/>
<keyword id="KW-0963">Cytoplasm</keyword>
<keyword id="KW-0227">DNA damage</keyword>
<keyword id="KW-0228">DNA excision</keyword>
<keyword id="KW-0234">DNA repair</keyword>
<keyword id="KW-0267">Excision nuclease</keyword>
<keyword id="KW-0742">SOS response</keyword>